<gene>
    <name evidence="1" type="primary">pgk</name>
    <name type="ordered locus">TRQ2_0240</name>
</gene>
<evidence type="ECO:0000255" key="1">
    <source>
        <dbReference type="HAMAP-Rule" id="MF_00145"/>
    </source>
</evidence>
<name>PGK_THESQ</name>
<proteinExistence type="inferred from homology"/>
<reference key="1">
    <citation type="journal article" date="2011" name="J. Bacteriol.">
        <title>Genome sequence of Thermotoga sp. strain RQ2, a hyperthermophilic bacterium isolated from a geothermally heated region of the seafloor near Ribeira Quente, the Azores.</title>
        <authorList>
            <person name="Swithers K.S."/>
            <person name="DiPippo J.L."/>
            <person name="Bruce D.C."/>
            <person name="Detter C."/>
            <person name="Tapia R."/>
            <person name="Han S."/>
            <person name="Saunders E."/>
            <person name="Goodwin L.A."/>
            <person name="Han J."/>
            <person name="Woyke T."/>
            <person name="Pitluck S."/>
            <person name="Pennacchio L."/>
            <person name="Nolan M."/>
            <person name="Mikhailova N."/>
            <person name="Lykidis A."/>
            <person name="Land M.L."/>
            <person name="Brettin T."/>
            <person name="Stetter K.O."/>
            <person name="Nelson K.E."/>
            <person name="Gogarten J.P."/>
            <person name="Noll K.M."/>
        </authorList>
    </citation>
    <scope>NUCLEOTIDE SEQUENCE [LARGE SCALE GENOMIC DNA]</scope>
    <source>
        <strain>RQ2</strain>
    </source>
</reference>
<keyword id="KW-0067">ATP-binding</keyword>
<keyword id="KW-0963">Cytoplasm</keyword>
<keyword id="KW-0324">Glycolysis</keyword>
<keyword id="KW-0418">Kinase</keyword>
<keyword id="KW-0547">Nucleotide-binding</keyword>
<keyword id="KW-0808">Transferase</keyword>
<accession>B1L8B8</accession>
<organism>
    <name type="scientific">Thermotoga sp. (strain RQ2)</name>
    <dbReference type="NCBI Taxonomy" id="126740"/>
    <lineage>
        <taxon>Bacteria</taxon>
        <taxon>Thermotogati</taxon>
        <taxon>Thermotogota</taxon>
        <taxon>Thermotogae</taxon>
        <taxon>Thermotogales</taxon>
        <taxon>Thermotogaceae</taxon>
        <taxon>Thermotoga</taxon>
    </lineage>
</organism>
<dbReference type="EC" id="2.7.2.3" evidence="1"/>
<dbReference type="EMBL" id="CP000969">
    <property type="protein sequence ID" value="ACB08600.1"/>
    <property type="molecule type" value="Genomic_DNA"/>
</dbReference>
<dbReference type="RefSeq" id="WP_012310407.1">
    <property type="nucleotide sequence ID" value="NC_010483.1"/>
</dbReference>
<dbReference type="SMR" id="B1L8B8"/>
<dbReference type="KEGG" id="trq:TRQ2_0240"/>
<dbReference type="HOGENOM" id="CLU_025427_0_2_0"/>
<dbReference type="UniPathway" id="UPA00109">
    <property type="reaction ID" value="UER00185"/>
</dbReference>
<dbReference type="Proteomes" id="UP000001687">
    <property type="component" value="Chromosome"/>
</dbReference>
<dbReference type="GO" id="GO:0005829">
    <property type="term" value="C:cytosol"/>
    <property type="evidence" value="ECO:0007669"/>
    <property type="project" value="TreeGrafter"/>
</dbReference>
<dbReference type="GO" id="GO:0043531">
    <property type="term" value="F:ADP binding"/>
    <property type="evidence" value="ECO:0007669"/>
    <property type="project" value="TreeGrafter"/>
</dbReference>
<dbReference type="GO" id="GO:0005524">
    <property type="term" value="F:ATP binding"/>
    <property type="evidence" value="ECO:0007669"/>
    <property type="project" value="UniProtKB-KW"/>
</dbReference>
<dbReference type="GO" id="GO:0004618">
    <property type="term" value="F:phosphoglycerate kinase activity"/>
    <property type="evidence" value="ECO:0007669"/>
    <property type="project" value="UniProtKB-UniRule"/>
</dbReference>
<dbReference type="GO" id="GO:0006094">
    <property type="term" value="P:gluconeogenesis"/>
    <property type="evidence" value="ECO:0007669"/>
    <property type="project" value="TreeGrafter"/>
</dbReference>
<dbReference type="GO" id="GO:0006096">
    <property type="term" value="P:glycolytic process"/>
    <property type="evidence" value="ECO:0007669"/>
    <property type="project" value="UniProtKB-UniRule"/>
</dbReference>
<dbReference type="CDD" id="cd00318">
    <property type="entry name" value="Phosphoglycerate_kinase"/>
    <property type="match status" value="1"/>
</dbReference>
<dbReference type="FunFam" id="3.40.50.1260:FF:000007">
    <property type="entry name" value="Phosphoglycerate kinase"/>
    <property type="match status" value="1"/>
</dbReference>
<dbReference type="FunFam" id="3.40.50.1260:FF:000008">
    <property type="entry name" value="Phosphoglycerate kinase"/>
    <property type="match status" value="1"/>
</dbReference>
<dbReference type="Gene3D" id="3.40.50.1260">
    <property type="entry name" value="Phosphoglycerate kinase, N-terminal domain"/>
    <property type="match status" value="2"/>
</dbReference>
<dbReference type="HAMAP" id="MF_00145">
    <property type="entry name" value="Phosphoglyc_kinase"/>
    <property type="match status" value="1"/>
</dbReference>
<dbReference type="InterPro" id="IPR001576">
    <property type="entry name" value="Phosphoglycerate_kinase"/>
</dbReference>
<dbReference type="InterPro" id="IPR015911">
    <property type="entry name" value="Phosphoglycerate_kinase_CS"/>
</dbReference>
<dbReference type="InterPro" id="IPR015824">
    <property type="entry name" value="Phosphoglycerate_kinase_N"/>
</dbReference>
<dbReference type="InterPro" id="IPR036043">
    <property type="entry name" value="Phosphoglycerate_kinase_sf"/>
</dbReference>
<dbReference type="PANTHER" id="PTHR11406">
    <property type="entry name" value="PHOSPHOGLYCERATE KINASE"/>
    <property type="match status" value="1"/>
</dbReference>
<dbReference type="PANTHER" id="PTHR11406:SF23">
    <property type="entry name" value="PHOSPHOGLYCERATE KINASE 1, CHLOROPLASTIC-RELATED"/>
    <property type="match status" value="1"/>
</dbReference>
<dbReference type="Pfam" id="PF00162">
    <property type="entry name" value="PGK"/>
    <property type="match status" value="1"/>
</dbReference>
<dbReference type="PIRSF" id="PIRSF000724">
    <property type="entry name" value="Pgk"/>
    <property type="match status" value="1"/>
</dbReference>
<dbReference type="PRINTS" id="PR00477">
    <property type="entry name" value="PHGLYCKINASE"/>
</dbReference>
<dbReference type="SUPFAM" id="SSF53748">
    <property type="entry name" value="Phosphoglycerate kinase"/>
    <property type="match status" value="1"/>
</dbReference>
<dbReference type="PROSITE" id="PS00111">
    <property type="entry name" value="PGLYCERATE_KINASE"/>
    <property type="match status" value="1"/>
</dbReference>
<feature type="chain" id="PRO_1000096388" description="Phosphoglycerate kinase">
    <location>
        <begin position="1"/>
        <end position="399"/>
    </location>
</feature>
<feature type="binding site" evidence="1">
    <location>
        <begin position="21"/>
        <end position="23"/>
    </location>
    <ligand>
        <name>substrate</name>
    </ligand>
</feature>
<feature type="binding site" evidence="1">
    <location>
        <position position="36"/>
    </location>
    <ligand>
        <name>substrate</name>
    </ligand>
</feature>
<feature type="binding site" evidence="1">
    <location>
        <begin position="59"/>
        <end position="62"/>
    </location>
    <ligand>
        <name>substrate</name>
    </ligand>
</feature>
<feature type="binding site" evidence="1">
    <location>
        <position position="118"/>
    </location>
    <ligand>
        <name>substrate</name>
    </ligand>
</feature>
<feature type="binding site" evidence="1">
    <location>
        <position position="151"/>
    </location>
    <ligand>
        <name>substrate</name>
    </ligand>
</feature>
<feature type="binding site" evidence="1">
    <location>
        <position position="201"/>
    </location>
    <ligand>
        <name>ATP</name>
        <dbReference type="ChEBI" id="CHEBI:30616"/>
    </ligand>
</feature>
<feature type="binding site" evidence="1">
    <location>
        <position position="293"/>
    </location>
    <ligand>
        <name>ATP</name>
        <dbReference type="ChEBI" id="CHEBI:30616"/>
    </ligand>
</feature>
<feature type="binding site" evidence="1">
    <location>
        <position position="324"/>
    </location>
    <ligand>
        <name>ATP</name>
        <dbReference type="ChEBI" id="CHEBI:30616"/>
    </ligand>
</feature>
<feature type="binding site" evidence="1">
    <location>
        <begin position="353"/>
        <end position="356"/>
    </location>
    <ligand>
        <name>ATP</name>
        <dbReference type="ChEBI" id="CHEBI:30616"/>
    </ligand>
</feature>
<sequence>MEKMTIRDVDLKGKRVIMRVDFNVPVKDGVVQDDTRIRAALPTIKYALEQGAKVIFLSHLGRPKGEPSPEFSLAPVAKRLSELLGKEVKFVPAVVGDEVKKAVEELKEGEVLLLENTRFHPGETKNDPELAKFWASLADIHVNDAFGTAHRAHASNVGIAQFIPSVAGFLMEKEIKFLSKVTYNPEKPYVVVLGGAKVSDKIGVITNLMEKADRILIGGAMMFTFLKALGKEVGSSRVEEDKIDLAKELLEKAKEKGVEIVLPVDAVIAQKIEPGVEKKVVRIDDGIPEGWMGLDIGPETVELFKQKLSDAKTVVWNGPMGVFEIDDFAEGTKQVALAIAALTEKGAITVVGGGDSAAAVNKFGLEDKFSHVSTGGGASLEFLEGKELPGIASIADKKK</sequence>
<comment type="catalytic activity">
    <reaction evidence="1">
        <text>(2R)-3-phosphoglycerate + ATP = (2R)-3-phospho-glyceroyl phosphate + ADP</text>
        <dbReference type="Rhea" id="RHEA:14801"/>
        <dbReference type="ChEBI" id="CHEBI:30616"/>
        <dbReference type="ChEBI" id="CHEBI:57604"/>
        <dbReference type="ChEBI" id="CHEBI:58272"/>
        <dbReference type="ChEBI" id="CHEBI:456216"/>
        <dbReference type="EC" id="2.7.2.3"/>
    </reaction>
</comment>
<comment type="pathway">
    <text evidence="1">Carbohydrate degradation; glycolysis; pyruvate from D-glyceraldehyde 3-phosphate: step 2/5.</text>
</comment>
<comment type="subunit">
    <text evidence="1">Monomer.</text>
</comment>
<comment type="subcellular location">
    <subcellularLocation>
        <location evidence="1">Cytoplasm</location>
    </subcellularLocation>
</comment>
<comment type="similarity">
    <text evidence="1">Belongs to the phosphoglycerate kinase family.</text>
</comment>
<protein>
    <recommendedName>
        <fullName evidence="1">Phosphoglycerate kinase</fullName>
        <ecNumber evidence="1">2.7.2.3</ecNumber>
    </recommendedName>
</protein>